<sequence length="604" mass="67873">MMRAVWEALAALAAVACLVGAVRGGPGLSMFAGQAAQPDPCSDENGHPRRCIPDFVNAAFGKDVRVSSTCGRPPARYCVVSERGEERLRSCHLCNSSDPKKAHPPAFLTDLNNPHNLTCWQSENYLQFPHNVTLTLSLGKKFEVTYVSLQFCSPRPESMAIYKSMDYGRTWVPFQFYSTQCRKMYNRPHRAPITKQNEQEAVCTDSHTDMRPLSGGLIAFSTLDGRPSAHDFDNSPVLQDWVTATDIRVAFSRLHTFGDENEDDSELARDSYYYAVSDLQVGGRCKCNGHAARCVRDRDDSLVCDCRHNTAGPECDRCKPFHYDRPWQRATAREANECVACNCNLHARRCRFNMELYKLSGRKSGGVCLNCRHNTAGRHCHYCKEGFYRDMGKPITHRKACKACDCHPVGAAGKTCNQTTGQCPCKDGVTGITCNRCAKGYQQSRSPIAPCIKIPVAPPTTAASSMEEPEDCDSYCKASKGKLKMNMKKYCRKDYAVQIHILKADKAGDWWKFTVNIISVYKQGTSRIRRGDQSLWIRSRDIAXKCPKIKPLKKYLLLGNAEDSPDQSGIVADKSXLVIQWRDTWARRXRKFQQREKKGKCKKA</sequence>
<feature type="signal peptide" evidence="4">
    <location>
        <begin position="1"/>
        <end position="24"/>
    </location>
</feature>
<feature type="chain" id="PRO_0000320574" description="Netrin-1">
    <location>
        <begin position="25"/>
        <end position="604"/>
    </location>
</feature>
<feature type="domain" description="Laminin N-terminal" evidence="7">
    <location>
        <begin position="47"/>
        <end position="284"/>
    </location>
</feature>
<feature type="domain" description="Laminin EGF-like 1" evidence="6">
    <location>
        <begin position="285"/>
        <end position="340"/>
    </location>
</feature>
<feature type="domain" description="Laminin EGF-like 2" evidence="6">
    <location>
        <begin position="341"/>
        <end position="403"/>
    </location>
</feature>
<feature type="domain" description="Laminin EGF-like 3" evidence="6">
    <location>
        <begin position="404"/>
        <end position="453"/>
    </location>
</feature>
<feature type="domain" description="NTR" evidence="5">
    <location>
        <begin position="472"/>
        <end position="601"/>
    </location>
</feature>
<feature type="short sequence motif" description="Cell attachment site" evidence="4">
    <location>
        <begin position="530"/>
        <end position="532"/>
    </location>
</feature>
<feature type="glycosylation site" description="N-linked (GlcNAc...) asparagine" evidence="4">
    <location>
        <position position="95"/>
    </location>
</feature>
<feature type="glycosylation site" description="N-linked (GlcNAc...) asparagine" evidence="4">
    <location>
        <position position="116"/>
    </location>
</feature>
<feature type="glycosylation site" description="N-linked (GlcNAc...) asparagine" evidence="4">
    <location>
        <position position="131"/>
    </location>
</feature>
<feature type="glycosylation site" description="N-linked (GlcNAc...) asparagine" evidence="4">
    <location>
        <position position="417"/>
    </location>
</feature>
<feature type="disulfide bond" evidence="1">
    <location>
        <begin position="119"/>
        <end position="152"/>
    </location>
</feature>
<feature type="disulfide bond" evidence="1">
    <location>
        <begin position="285"/>
        <end position="294"/>
    </location>
</feature>
<feature type="disulfide bond" evidence="1">
    <location>
        <begin position="287"/>
        <end position="304"/>
    </location>
</feature>
<feature type="disulfide bond" evidence="1">
    <location>
        <begin position="306"/>
        <end position="315"/>
    </location>
</feature>
<feature type="disulfide bond" evidence="1">
    <location>
        <begin position="318"/>
        <end position="338"/>
    </location>
</feature>
<feature type="disulfide bond" evidence="1">
    <location>
        <begin position="341"/>
        <end position="350"/>
    </location>
</feature>
<feature type="disulfide bond" evidence="1">
    <location>
        <begin position="343"/>
        <end position="368"/>
    </location>
</feature>
<feature type="disulfide bond" evidence="1">
    <location>
        <begin position="371"/>
        <end position="380"/>
    </location>
</feature>
<feature type="disulfide bond" evidence="1">
    <location>
        <begin position="383"/>
        <end position="401"/>
    </location>
</feature>
<feature type="disulfide bond" evidence="1">
    <location>
        <begin position="404"/>
        <end position="416"/>
    </location>
</feature>
<feature type="disulfide bond" evidence="1">
    <location>
        <begin position="406"/>
        <end position="423"/>
    </location>
</feature>
<feature type="disulfide bond" evidence="1">
    <location>
        <begin position="425"/>
        <end position="434"/>
    </location>
</feature>
<feature type="disulfide bond" evidence="1">
    <location>
        <begin position="437"/>
        <end position="451"/>
    </location>
</feature>
<feature type="disulfide bond" evidence="1">
    <location>
        <begin position="472"/>
        <end position="544"/>
    </location>
</feature>
<feature type="disulfide bond" evidence="1">
    <location>
        <begin position="491"/>
        <end position="601"/>
    </location>
</feature>
<evidence type="ECO:0000250" key="1"/>
<evidence type="ECO:0000250" key="2">
    <source>
        <dbReference type="UniProtKB" id="O09118"/>
    </source>
</evidence>
<evidence type="ECO:0000250" key="3">
    <source>
        <dbReference type="UniProtKB" id="O95631"/>
    </source>
</evidence>
<evidence type="ECO:0000255" key="4"/>
<evidence type="ECO:0000255" key="5">
    <source>
        <dbReference type="PROSITE-ProRule" id="PRU00295"/>
    </source>
</evidence>
<evidence type="ECO:0000255" key="6">
    <source>
        <dbReference type="PROSITE-ProRule" id="PRU00460"/>
    </source>
</evidence>
<evidence type="ECO:0000255" key="7">
    <source>
        <dbReference type="PROSITE-ProRule" id="PRU00466"/>
    </source>
</evidence>
<evidence type="ECO:0000269" key="8">
    <source>
    </source>
</evidence>
<organism>
    <name type="scientific">Rattus norvegicus</name>
    <name type="common">Rat</name>
    <dbReference type="NCBI Taxonomy" id="10116"/>
    <lineage>
        <taxon>Eukaryota</taxon>
        <taxon>Metazoa</taxon>
        <taxon>Chordata</taxon>
        <taxon>Craniata</taxon>
        <taxon>Vertebrata</taxon>
        <taxon>Euteleostomi</taxon>
        <taxon>Mammalia</taxon>
        <taxon>Eutheria</taxon>
        <taxon>Euarchontoglires</taxon>
        <taxon>Glires</taxon>
        <taxon>Rodentia</taxon>
        <taxon>Myomorpha</taxon>
        <taxon>Muroidea</taxon>
        <taxon>Muridae</taxon>
        <taxon>Murinae</taxon>
        <taxon>Rattus</taxon>
    </lineage>
</organism>
<name>NET1_RAT</name>
<reference key="1">
    <citation type="journal article" date="2001" name="J. Neurosci.">
        <title>Widespread expression of netrin-1 by neurons and oligodendrocytes in the adult mammalian spinal cord.</title>
        <authorList>
            <person name="Manitt C."/>
            <person name="Colicos M.A."/>
            <person name="Thompson K.M."/>
            <person name="Rousselle E."/>
            <person name="Peterson A.C."/>
            <person name="Kennedy T.E."/>
        </authorList>
    </citation>
    <scope>NUCLEOTIDE SEQUENCE [MRNA]</scope>
</reference>
<reference key="2">
    <citation type="journal article" date="1996" name="Cell">
        <title>Deleted in colorectal cancer (DCC) encodes a netrin receptor.</title>
        <authorList>
            <person name="Keino-Masu K."/>
            <person name="Masu M."/>
            <person name="Hinck L."/>
            <person name="Leonardo E.D."/>
            <person name="Chan S.S.-Y."/>
            <person name="Culotti J.G."/>
            <person name="Tessier-Lavigne M."/>
        </authorList>
    </citation>
    <scope>FUNCTION</scope>
    <scope>INTERACTION WITH DCC</scope>
</reference>
<proteinExistence type="evidence at protein level"/>
<keyword id="KW-0053">Apoptosis</keyword>
<keyword id="KW-0963">Cytoplasm</keyword>
<keyword id="KW-1015">Disulfide bond</keyword>
<keyword id="KW-0325">Glycoprotein</keyword>
<keyword id="KW-0424">Laminin EGF-like domain</keyword>
<keyword id="KW-1185">Reference proteome</keyword>
<keyword id="KW-0677">Repeat</keyword>
<keyword id="KW-0964">Secreted</keyword>
<keyword id="KW-0732">Signal</keyword>
<gene>
    <name type="primary">Ntn1</name>
</gene>
<comment type="function">
    <text evidence="2 3 8">Netrins control guidance of CNS commissural axons and peripheral motor axons. Its association with either DCC or some UNC5 receptors will lead to axon attraction or repulsion, respectively. Binding to UNC5C might cause dissociation of UNC5C from polymerized TUBB3 in microtubules and thereby lead to increased microtubule dynamics and axon repulsion (By similarity). Involved in dorsal root ganglion axon projection towards the spinal cord (By similarity). It also serves as a survival factor via its association with its receptors which prevent the initiation of apoptosis. Involved in colorectal tumorigenesis by regulating apoptosis (By similarity).</text>
</comment>
<comment type="subunit">
    <text evidence="2 3">Binds to its receptors; DCC, UNC5A, UNC5B, UNC5C and probably UNC5D. Binds to its receptor; DSCAM (By similarity). Interacts with APP (By similarity).</text>
</comment>
<comment type="subcellular location">
    <subcellularLocation>
        <location evidence="3">Secreted</location>
    </subcellularLocation>
    <subcellularLocation>
        <location evidence="3">Cytoplasm</location>
    </subcellularLocation>
    <text evidence="3">Mainly secreted.</text>
</comment>
<protein>
    <recommendedName>
        <fullName>Netrin-1</fullName>
    </recommendedName>
</protein>
<dbReference type="EMBL" id="AY028417">
    <property type="protein sequence ID" value="AAK17014.1"/>
    <property type="molecule type" value="mRNA"/>
</dbReference>
<dbReference type="FunCoup" id="Q924Z9">
    <property type="interactions" value="813"/>
</dbReference>
<dbReference type="IntAct" id="Q924Z9">
    <property type="interactions" value="1"/>
</dbReference>
<dbReference type="STRING" id="10116.ENSRNOP00000005255"/>
<dbReference type="GlyCosmos" id="Q924Z9">
    <property type="glycosylation" value="4 sites, No reported glycans"/>
</dbReference>
<dbReference type="GlyGen" id="Q924Z9">
    <property type="glycosylation" value="4 sites"/>
</dbReference>
<dbReference type="PhosphoSitePlus" id="Q924Z9"/>
<dbReference type="PaxDb" id="10116-ENSRNOP00000005255"/>
<dbReference type="UCSC" id="RGD:619809">
    <property type="organism name" value="rat"/>
</dbReference>
<dbReference type="AGR" id="RGD:619809"/>
<dbReference type="RGD" id="619809">
    <property type="gene designation" value="Ntn1"/>
</dbReference>
<dbReference type="eggNOG" id="KOG3512">
    <property type="taxonomic scope" value="Eukaryota"/>
</dbReference>
<dbReference type="InParanoid" id="Q924Z9"/>
<dbReference type="PhylomeDB" id="Q924Z9"/>
<dbReference type="PRO" id="PR:Q924Z9"/>
<dbReference type="Proteomes" id="UP000002494">
    <property type="component" value="Unplaced"/>
</dbReference>
<dbReference type="GO" id="GO:0005604">
    <property type="term" value="C:basement membrane"/>
    <property type="evidence" value="ECO:0000266"/>
    <property type="project" value="RGD"/>
</dbReference>
<dbReference type="GO" id="GO:0005737">
    <property type="term" value="C:cytoplasm"/>
    <property type="evidence" value="ECO:0000266"/>
    <property type="project" value="RGD"/>
</dbReference>
<dbReference type="GO" id="GO:0005576">
    <property type="term" value="C:extracellular region"/>
    <property type="evidence" value="ECO:0000266"/>
    <property type="project" value="RGD"/>
</dbReference>
<dbReference type="GO" id="GO:0098978">
    <property type="term" value="C:glutamatergic synapse"/>
    <property type="evidence" value="ECO:0000266"/>
    <property type="project" value="RGD"/>
</dbReference>
<dbReference type="GO" id="GO:0045202">
    <property type="term" value="C:synapse"/>
    <property type="evidence" value="ECO:0000266"/>
    <property type="project" value="RGD"/>
</dbReference>
<dbReference type="GO" id="GO:0009887">
    <property type="term" value="P:animal organ morphogenesis"/>
    <property type="evidence" value="ECO:0000318"/>
    <property type="project" value="GO_Central"/>
</dbReference>
<dbReference type="GO" id="GO:0033564">
    <property type="term" value="P:anterior/posterior axon guidance"/>
    <property type="evidence" value="ECO:0000266"/>
    <property type="project" value="RGD"/>
</dbReference>
<dbReference type="GO" id="GO:0006915">
    <property type="term" value="P:apoptotic process"/>
    <property type="evidence" value="ECO:0007669"/>
    <property type="project" value="UniProtKB-KW"/>
</dbReference>
<dbReference type="GO" id="GO:0007411">
    <property type="term" value="P:axon guidance"/>
    <property type="evidence" value="ECO:0000266"/>
    <property type="project" value="RGD"/>
</dbReference>
<dbReference type="GO" id="GO:0007409">
    <property type="term" value="P:axonogenesis"/>
    <property type="evidence" value="ECO:0000266"/>
    <property type="project" value="RGD"/>
</dbReference>
<dbReference type="GO" id="GO:0032488">
    <property type="term" value="P:Cdc42 protein signal transduction"/>
    <property type="evidence" value="ECO:0000314"/>
    <property type="project" value="UniProtKB"/>
</dbReference>
<dbReference type="GO" id="GO:0008283">
    <property type="term" value="P:cell population proliferation"/>
    <property type="evidence" value="ECO:0000266"/>
    <property type="project" value="RGD"/>
</dbReference>
<dbReference type="GO" id="GO:0098609">
    <property type="term" value="P:cell-cell adhesion"/>
    <property type="evidence" value="ECO:0000266"/>
    <property type="project" value="RGD"/>
</dbReference>
<dbReference type="GO" id="GO:0061643">
    <property type="term" value="P:chemorepulsion of axon"/>
    <property type="evidence" value="ECO:0000250"/>
    <property type="project" value="UniProtKB"/>
</dbReference>
<dbReference type="GO" id="GO:0016358">
    <property type="term" value="P:dendrite development"/>
    <property type="evidence" value="ECO:0000318"/>
    <property type="project" value="GO_Central"/>
</dbReference>
<dbReference type="GO" id="GO:0014009">
    <property type="term" value="P:glial cell proliferation"/>
    <property type="evidence" value="ECO:0000266"/>
    <property type="project" value="RGD"/>
</dbReference>
<dbReference type="GO" id="GO:0042472">
    <property type="term" value="P:inner ear morphogenesis"/>
    <property type="evidence" value="ECO:0000266"/>
    <property type="project" value="RGD"/>
</dbReference>
<dbReference type="GO" id="GO:0030879">
    <property type="term" value="P:mammary gland development"/>
    <property type="evidence" value="ECO:0000266"/>
    <property type="project" value="RGD"/>
</dbReference>
<dbReference type="GO" id="GO:0060603">
    <property type="term" value="P:mammary gland duct morphogenesis"/>
    <property type="evidence" value="ECO:0000266"/>
    <property type="project" value="RGD"/>
</dbReference>
<dbReference type="GO" id="GO:0008045">
    <property type="term" value="P:motor neuron axon guidance"/>
    <property type="evidence" value="ECO:0000318"/>
    <property type="project" value="GO_Central"/>
</dbReference>
<dbReference type="GO" id="GO:0097475">
    <property type="term" value="P:motor neuron migration"/>
    <property type="evidence" value="ECO:0000266"/>
    <property type="project" value="RGD"/>
</dbReference>
<dbReference type="GO" id="GO:0030517">
    <property type="term" value="P:negative regulation of axon extension"/>
    <property type="evidence" value="ECO:0000266"/>
    <property type="project" value="RGD"/>
</dbReference>
<dbReference type="GO" id="GO:0001764">
    <property type="term" value="P:neuron migration"/>
    <property type="evidence" value="ECO:0000266"/>
    <property type="project" value="RGD"/>
</dbReference>
<dbReference type="GO" id="GO:0007097">
    <property type="term" value="P:nuclear migration"/>
    <property type="evidence" value="ECO:0000266"/>
    <property type="project" value="RGD"/>
</dbReference>
<dbReference type="GO" id="GO:0045773">
    <property type="term" value="P:positive regulation of axon extension"/>
    <property type="evidence" value="ECO:0000314"/>
    <property type="project" value="UniProtKB"/>
</dbReference>
<dbReference type="GO" id="GO:2000147">
    <property type="term" value="P:positive regulation of cell motility"/>
    <property type="evidence" value="ECO:0000314"/>
    <property type="project" value="UniProtKB"/>
</dbReference>
<dbReference type="GO" id="GO:0060252">
    <property type="term" value="P:positive regulation of glial cell proliferation"/>
    <property type="evidence" value="ECO:0000266"/>
    <property type="project" value="RGD"/>
</dbReference>
<dbReference type="GO" id="GO:0007265">
    <property type="term" value="P:Ras protein signal transduction"/>
    <property type="evidence" value="ECO:0000314"/>
    <property type="project" value="UniProtKB"/>
</dbReference>
<dbReference type="GO" id="GO:0030334">
    <property type="term" value="P:regulation of cell migration"/>
    <property type="evidence" value="ECO:0000266"/>
    <property type="project" value="RGD"/>
</dbReference>
<dbReference type="GO" id="GO:1903975">
    <property type="term" value="P:regulation of glial cell migration"/>
    <property type="evidence" value="ECO:0000266"/>
    <property type="project" value="RGD"/>
</dbReference>
<dbReference type="GO" id="GO:0051963">
    <property type="term" value="P:regulation of synapse assembly"/>
    <property type="evidence" value="ECO:0000266"/>
    <property type="project" value="RGD"/>
</dbReference>
<dbReference type="GO" id="GO:0006930">
    <property type="term" value="P:substrate-dependent cell migration, cell extension"/>
    <property type="evidence" value="ECO:0000314"/>
    <property type="project" value="UniProtKB"/>
</dbReference>
<dbReference type="GO" id="GO:0009888">
    <property type="term" value="P:tissue development"/>
    <property type="evidence" value="ECO:0000318"/>
    <property type="project" value="GO_Central"/>
</dbReference>
<dbReference type="CDD" id="cd00055">
    <property type="entry name" value="EGF_Lam"/>
    <property type="match status" value="3"/>
</dbReference>
<dbReference type="CDD" id="cd03579">
    <property type="entry name" value="NTR_netrin-1_like"/>
    <property type="match status" value="1"/>
</dbReference>
<dbReference type="FunFam" id="2.10.25.10:FF:000081">
    <property type="entry name" value="Netrin 1"/>
    <property type="match status" value="1"/>
</dbReference>
<dbReference type="FunFam" id="2.40.50.120:FF:000001">
    <property type="entry name" value="Netrin 1"/>
    <property type="match status" value="1"/>
</dbReference>
<dbReference type="FunFam" id="2.60.120.260:FF:000015">
    <property type="entry name" value="Netrin 1"/>
    <property type="match status" value="1"/>
</dbReference>
<dbReference type="FunFam" id="2.10.25.10:FF:000048">
    <property type="entry name" value="Netrin 3"/>
    <property type="match status" value="1"/>
</dbReference>
<dbReference type="Gene3D" id="2.40.50.120">
    <property type="match status" value="1"/>
</dbReference>
<dbReference type="Gene3D" id="2.60.120.260">
    <property type="entry name" value="Galactose-binding domain-like"/>
    <property type="match status" value="1"/>
</dbReference>
<dbReference type="Gene3D" id="2.10.25.10">
    <property type="entry name" value="Laminin"/>
    <property type="match status" value="2"/>
</dbReference>
<dbReference type="InterPro" id="IPR008979">
    <property type="entry name" value="Galactose-bd-like_sf"/>
</dbReference>
<dbReference type="InterPro" id="IPR050440">
    <property type="entry name" value="Laminin/Netrin_ECM"/>
</dbReference>
<dbReference type="InterPro" id="IPR008211">
    <property type="entry name" value="Laminin_N"/>
</dbReference>
<dbReference type="InterPro" id="IPR002049">
    <property type="entry name" value="LE_dom"/>
</dbReference>
<dbReference type="InterPro" id="IPR056863">
    <property type="entry name" value="LMN_ATRN_NET-like_EGF"/>
</dbReference>
<dbReference type="InterPro" id="IPR001134">
    <property type="entry name" value="Netrin_domain"/>
</dbReference>
<dbReference type="InterPro" id="IPR018933">
    <property type="entry name" value="Netrin_module_non-TIMP"/>
</dbReference>
<dbReference type="InterPro" id="IPR008993">
    <property type="entry name" value="TIMP-like_OB-fold"/>
</dbReference>
<dbReference type="PANTHER" id="PTHR10574:SF378">
    <property type="entry name" value="NETRIN-1"/>
    <property type="match status" value="1"/>
</dbReference>
<dbReference type="PANTHER" id="PTHR10574">
    <property type="entry name" value="NETRIN/LAMININ-RELATED"/>
    <property type="match status" value="1"/>
</dbReference>
<dbReference type="Pfam" id="PF00053">
    <property type="entry name" value="EGF_laminin"/>
    <property type="match status" value="2"/>
</dbReference>
<dbReference type="Pfam" id="PF24973">
    <property type="entry name" value="EGF_LMN_ATRN"/>
    <property type="match status" value="1"/>
</dbReference>
<dbReference type="Pfam" id="PF00055">
    <property type="entry name" value="Laminin_N"/>
    <property type="match status" value="1"/>
</dbReference>
<dbReference type="Pfam" id="PF01759">
    <property type="entry name" value="NTR"/>
    <property type="match status" value="1"/>
</dbReference>
<dbReference type="SMART" id="SM00643">
    <property type="entry name" value="C345C"/>
    <property type="match status" value="1"/>
</dbReference>
<dbReference type="SMART" id="SM00180">
    <property type="entry name" value="EGF_Lam"/>
    <property type="match status" value="3"/>
</dbReference>
<dbReference type="SMART" id="SM00136">
    <property type="entry name" value="LamNT"/>
    <property type="match status" value="1"/>
</dbReference>
<dbReference type="SUPFAM" id="SSF57196">
    <property type="entry name" value="EGF/Laminin"/>
    <property type="match status" value="3"/>
</dbReference>
<dbReference type="SUPFAM" id="SSF49785">
    <property type="entry name" value="Galactose-binding domain-like"/>
    <property type="match status" value="1"/>
</dbReference>
<dbReference type="SUPFAM" id="SSF50242">
    <property type="entry name" value="TIMP-like"/>
    <property type="match status" value="1"/>
</dbReference>
<dbReference type="PROSITE" id="PS00022">
    <property type="entry name" value="EGF_1"/>
    <property type="match status" value="2"/>
</dbReference>
<dbReference type="PROSITE" id="PS01248">
    <property type="entry name" value="EGF_LAM_1"/>
    <property type="match status" value="3"/>
</dbReference>
<dbReference type="PROSITE" id="PS50027">
    <property type="entry name" value="EGF_LAM_2"/>
    <property type="match status" value="3"/>
</dbReference>
<dbReference type="PROSITE" id="PS51117">
    <property type="entry name" value="LAMININ_NTER"/>
    <property type="match status" value="1"/>
</dbReference>
<dbReference type="PROSITE" id="PS50189">
    <property type="entry name" value="NTR"/>
    <property type="match status" value="1"/>
</dbReference>
<accession>Q924Z9</accession>